<accession>Q5LUZ4</accession>
<reference key="1">
    <citation type="journal article" date="2004" name="Nature">
        <title>Genome sequence of Silicibacter pomeroyi reveals adaptations to the marine environment.</title>
        <authorList>
            <person name="Moran M.A."/>
            <person name="Buchan A."/>
            <person name="Gonzalez J.M."/>
            <person name="Heidelberg J.F."/>
            <person name="Whitman W.B."/>
            <person name="Kiene R.P."/>
            <person name="Henriksen J.R."/>
            <person name="King G.M."/>
            <person name="Belas R."/>
            <person name="Fuqua C."/>
            <person name="Brinkac L.M."/>
            <person name="Lewis M."/>
            <person name="Johri S."/>
            <person name="Weaver B."/>
            <person name="Pai G."/>
            <person name="Eisen J.A."/>
            <person name="Rahe E."/>
            <person name="Sheldon W.M."/>
            <person name="Ye W."/>
            <person name="Miller T.R."/>
            <person name="Carlton J."/>
            <person name="Rasko D.A."/>
            <person name="Paulsen I.T."/>
            <person name="Ren Q."/>
            <person name="Daugherty S.C."/>
            <person name="DeBoy R.T."/>
            <person name="Dodson R.J."/>
            <person name="Durkin A.S."/>
            <person name="Madupu R."/>
            <person name="Nelson W.C."/>
            <person name="Sullivan S.A."/>
            <person name="Rosovitz M.J."/>
            <person name="Haft D.H."/>
            <person name="Selengut J."/>
            <person name="Ward N."/>
        </authorList>
    </citation>
    <scope>NUCLEOTIDE SEQUENCE [LARGE SCALE GENOMIC DNA]</scope>
    <source>
        <strain>ATCC 700808 / DSM 15171 / DSS-3</strain>
    </source>
</reference>
<reference key="2">
    <citation type="journal article" date="2014" name="Stand. Genomic Sci.">
        <title>An updated genome annotation for the model marine bacterium Ruegeria pomeroyi DSS-3.</title>
        <authorList>
            <person name="Rivers A.R."/>
            <person name="Smith C.B."/>
            <person name="Moran M.A."/>
        </authorList>
    </citation>
    <scope>GENOME REANNOTATION</scope>
    <source>
        <strain>ATCC 700808 / DSM 15171 / DSS-3</strain>
    </source>
</reference>
<dbReference type="EC" id="2.5.1.145" evidence="1"/>
<dbReference type="EMBL" id="CP000031">
    <property type="protein sequence ID" value="AAV94213.1"/>
    <property type="molecule type" value="Genomic_DNA"/>
</dbReference>
<dbReference type="RefSeq" id="WP_011046657.1">
    <property type="nucleotide sequence ID" value="NC_003911.12"/>
</dbReference>
<dbReference type="SMR" id="Q5LUZ4"/>
<dbReference type="STRING" id="246200.SPO0908"/>
<dbReference type="PaxDb" id="246200-SPO0908"/>
<dbReference type="KEGG" id="sil:SPO0908"/>
<dbReference type="eggNOG" id="COG0682">
    <property type="taxonomic scope" value="Bacteria"/>
</dbReference>
<dbReference type="HOGENOM" id="CLU_013386_1_0_5"/>
<dbReference type="OrthoDB" id="871140at2"/>
<dbReference type="UniPathway" id="UPA00664"/>
<dbReference type="Proteomes" id="UP000001023">
    <property type="component" value="Chromosome"/>
</dbReference>
<dbReference type="GO" id="GO:0005886">
    <property type="term" value="C:plasma membrane"/>
    <property type="evidence" value="ECO:0007669"/>
    <property type="project" value="UniProtKB-SubCell"/>
</dbReference>
<dbReference type="GO" id="GO:0008961">
    <property type="term" value="F:phosphatidylglycerol-prolipoprotein diacylglyceryl transferase activity"/>
    <property type="evidence" value="ECO:0007669"/>
    <property type="project" value="UniProtKB-UniRule"/>
</dbReference>
<dbReference type="GO" id="GO:0042158">
    <property type="term" value="P:lipoprotein biosynthetic process"/>
    <property type="evidence" value="ECO:0007669"/>
    <property type="project" value="UniProtKB-UniRule"/>
</dbReference>
<dbReference type="HAMAP" id="MF_01147">
    <property type="entry name" value="Lgt"/>
    <property type="match status" value="1"/>
</dbReference>
<dbReference type="InterPro" id="IPR001640">
    <property type="entry name" value="Lgt"/>
</dbReference>
<dbReference type="NCBIfam" id="TIGR00544">
    <property type="entry name" value="lgt"/>
    <property type="match status" value="1"/>
</dbReference>
<dbReference type="PANTHER" id="PTHR30589:SF0">
    <property type="entry name" value="PHOSPHATIDYLGLYCEROL--PROLIPOPROTEIN DIACYLGLYCERYL TRANSFERASE"/>
    <property type="match status" value="1"/>
</dbReference>
<dbReference type="PANTHER" id="PTHR30589">
    <property type="entry name" value="PROLIPOPROTEIN DIACYLGLYCERYL TRANSFERASE"/>
    <property type="match status" value="1"/>
</dbReference>
<dbReference type="Pfam" id="PF01790">
    <property type="entry name" value="LGT"/>
    <property type="match status" value="1"/>
</dbReference>
<dbReference type="PROSITE" id="PS01311">
    <property type="entry name" value="LGT"/>
    <property type="match status" value="1"/>
</dbReference>
<gene>
    <name evidence="1" type="primary">lgt</name>
    <name type="ordered locus">SPO0908</name>
</gene>
<feature type="chain" id="PRO_0000172671" description="Phosphatidylglycerol--prolipoprotein diacylglyceryl transferase">
    <location>
        <begin position="1"/>
        <end position="295"/>
    </location>
</feature>
<feature type="transmembrane region" description="Helical" evidence="1">
    <location>
        <begin position="28"/>
        <end position="48"/>
    </location>
</feature>
<feature type="transmembrane region" description="Helical" evidence="1">
    <location>
        <begin position="69"/>
        <end position="89"/>
    </location>
</feature>
<feature type="transmembrane region" description="Helical" evidence="1">
    <location>
        <begin position="101"/>
        <end position="121"/>
    </location>
</feature>
<feature type="transmembrane region" description="Helical" evidence="1">
    <location>
        <begin position="131"/>
        <end position="151"/>
    </location>
</feature>
<feature type="transmembrane region" description="Helical" evidence="1">
    <location>
        <begin position="195"/>
        <end position="215"/>
    </location>
</feature>
<feature type="transmembrane region" description="Helical" evidence="1">
    <location>
        <begin position="224"/>
        <end position="244"/>
    </location>
</feature>
<feature type="transmembrane region" description="Helical" evidence="1">
    <location>
        <begin position="268"/>
        <end position="288"/>
    </location>
</feature>
<feature type="binding site" evidence="1">
    <location>
        <position position="152"/>
    </location>
    <ligand>
        <name>a 1,2-diacyl-sn-glycero-3-phospho-(1'-sn-glycerol)</name>
        <dbReference type="ChEBI" id="CHEBI:64716"/>
    </ligand>
</feature>
<organism>
    <name type="scientific">Ruegeria pomeroyi (strain ATCC 700808 / DSM 15171 / DSS-3)</name>
    <name type="common">Silicibacter pomeroyi</name>
    <dbReference type="NCBI Taxonomy" id="246200"/>
    <lineage>
        <taxon>Bacteria</taxon>
        <taxon>Pseudomonadati</taxon>
        <taxon>Pseudomonadota</taxon>
        <taxon>Alphaproteobacteria</taxon>
        <taxon>Rhodobacterales</taxon>
        <taxon>Roseobacteraceae</taxon>
        <taxon>Ruegeria</taxon>
    </lineage>
</organism>
<proteinExistence type="inferred from homology"/>
<name>LGT_RUEPO</name>
<sequence length="295" mass="32266">MQAVLNFPDLSPELFSISLFGMEFALRWYALAYIAGIVIAWRLAVLATRRAALWPANTPPMAPARIEDLLTWIILGVILGGRLGFVLFYQPAYYLANPTEILMVWQGGMAFHGGLLGVVIAAWLYSLRHNIPKLSLADLITHTVAPGLLLGRLANFINAELWGRPSDLPWAVIFPGPAAQACPGVVGLCARHPSQLYEAALEGLLLGTLLLWLVWRRGALKRPGLITGVFLAGYGLSRFVVEFFRQPDAQFVTPGNPLGLAWQVGEYGLTMGQLLSLPMIALGLWFVLRARAVPA</sequence>
<comment type="function">
    <text evidence="1">Catalyzes the transfer of the diacylglyceryl group from phosphatidylglycerol to the sulfhydryl group of the N-terminal cysteine of a prolipoprotein, the first step in the formation of mature lipoproteins.</text>
</comment>
<comment type="catalytic activity">
    <reaction evidence="1">
        <text>L-cysteinyl-[prolipoprotein] + a 1,2-diacyl-sn-glycero-3-phospho-(1'-sn-glycerol) = an S-1,2-diacyl-sn-glyceryl-L-cysteinyl-[prolipoprotein] + sn-glycerol 1-phosphate + H(+)</text>
        <dbReference type="Rhea" id="RHEA:56712"/>
        <dbReference type="Rhea" id="RHEA-COMP:14679"/>
        <dbReference type="Rhea" id="RHEA-COMP:14680"/>
        <dbReference type="ChEBI" id="CHEBI:15378"/>
        <dbReference type="ChEBI" id="CHEBI:29950"/>
        <dbReference type="ChEBI" id="CHEBI:57685"/>
        <dbReference type="ChEBI" id="CHEBI:64716"/>
        <dbReference type="ChEBI" id="CHEBI:140658"/>
        <dbReference type="EC" id="2.5.1.145"/>
    </reaction>
</comment>
<comment type="pathway">
    <text evidence="1">Protein modification; lipoprotein biosynthesis (diacylglyceryl transfer).</text>
</comment>
<comment type="subcellular location">
    <subcellularLocation>
        <location evidence="1">Cell inner membrane</location>
        <topology evidence="1">Multi-pass membrane protein</topology>
    </subcellularLocation>
</comment>
<comment type="similarity">
    <text evidence="1">Belongs to the Lgt family.</text>
</comment>
<keyword id="KW-0997">Cell inner membrane</keyword>
<keyword id="KW-1003">Cell membrane</keyword>
<keyword id="KW-0472">Membrane</keyword>
<keyword id="KW-1185">Reference proteome</keyword>
<keyword id="KW-0808">Transferase</keyword>
<keyword id="KW-0812">Transmembrane</keyword>
<keyword id="KW-1133">Transmembrane helix</keyword>
<evidence type="ECO:0000255" key="1">
    <source>
        <dbReference type="HAMAP-Rule" id="MF_01147"/>
    </source>
</evidence>
<protein>
    <recommendedName>
        <fullName evidence="1">Phosphatidylglycerol--prolipoprotein diacylglyceryl transferase</fullName>
        <ecNumber evidence="1">2.5.1.145</ecNumber>
    </recommendedName>
</protein>